<proteinExistence type="inferred from homology"/>
<comment type="function">
    <text evidence="1">Involved in mRNA degradation. Catalyzes the phosphorolysis of single-stranded polyribonucleotides processively in the 3'- to 5'-direction.</text>
</comment>
<comment type="catalytic activity">
    <reaction evidence="1">
        <text>RNA(n+1) + phosphate = RNA(n) + a ribonucleoside 5'-diphosphate</text>
        <dbReference type="Rhea" id="RHEA:22096"/>
        <dbReference type="Rhea" id="RHEA-COMP:14527"/>
        <dbReference type="Rhea" id="RHEA-COMP:17342"/>
        <dbReference type="ChEBI" id="CHEBI:43474"/>
        <dbReference type="ChEBI" id="CHEBI:57930"/>
        <dbReference type="ChEBI" id="CHEBI:140395"/>
        <dbReference type="EC" id="2.7.7.8"/>
    </reaction>
</comment>
<comment type="cofactor">
    <cofactor evidence="1">
        <name>Mg(2+)</name>
        <dbReference type="ChEBI" id="CHEBI:18420"/>
    </cofactor>
</comment>
<comment type="subcellular location">
    <subcellularLocation>
        <location evidence="1">Cytoplasm</location>
    </subcellularLocation>
</comment>
<comment type="similarity">
    <text evidence="1">Belongs to the polyribonucleotide nucleotidyltransferase family.</text>
</comment>
<reference key="1">
    <citation type="submission" date="2008-01" db="EMBL/GenBank/DDBJ databases">
        <title>Complete sequence of Thermoanaerobacter sp. X514.</title>
        <authorList>
            <consortium name="US DOE Joint Genome Institute"/>
            <person name="Copeland A."/>
            <person name="Lucas S."/>
            <person name="Lapidus A."/>
            <person name="Barry K."/>
            <person name="Glavina del Rio T."/>
            <person name="Dalin E."/>
            <person name="Tice H."/>
            <person name="Pitluck S."/>
            <person name="Bruce D."/>
            <person name="Goodwin L."/>
            <person name="Saunders E."/>
            <person name="Brettin T."/>
            <person name="Detter J.C."/>
            <person name="Han C."/>
            <person name="Schmutz J."/>
            <person name="Larimer F."/>
            <person name="Land M."/>
            <person name="Hauser L."/>
            <person name="Kyrpides N."/>
            <person name="Kim E."/>
            <person name="Hemme C."/>
            <person name="Fields M.W."/>
            <person name="He Z."/>
            <person name="Zhou J."/>
            <person name="Richardson P."/>
        </authorList>
    </citation>
    <scope>NUCLEOTIDE SEQUENCE [LARGE SCALE GENOMIC DNA]</scope>
    <source>
        <strain>X514</strain>
    </source>
</reference>
<evidence type="ECO:0000255" key="1">
    <source>
        <dbReference type="HAMAP-Rule" id="MF_01595"/>
    </source>
</evidence>
<dbReference type="EC" id="2.7.7.8" evidence="1"/>
<dbReference type="EMBL" id="CP000923">
    <property type="protein sequence ID" value="ABY92925.1"/>
    <property type="molecule type" value="Genomic_DNA"/>
</dbReference>
<dbReference type="RefSeq" id="WP_003866759.1">
    <property type="nucleotide sequence ID" value="NC_010320.1"/>
</dbReference>
<dbReference type="SMR" id="B0K1D0"/>
<dbReference type="KEGG" id="tex:Teth514_1639"/>
<dbReference type="HOGENOM" id="CLU_004217_2_2_9"/>
<dbReference type="Proteomes" id="UP000002155">
    <property type="component" value="Chromosome"/>
</dbReference>
<dbReference type="GO" id="GO:0005829">
    <property type="term" value="C:cytosol"/>
    <property type="evidence" value="ECO:0007669"/>
    <property type="project" value="TreeGrafter"/>
</dbReference>
<dbReference type="GO" id="GO:0000175">
    <property type="term" value="F:3'-5'-RNA exonuclease activity"/>
    <property type="evidence" value="ECO:0007669"/>
    <property type="project" value="TreeGrafter"/>
</dbReference>
<dbReference type="GO" id="GO:0000287">
    <property type="term" value="F:magnesium ion binding"/>
    <property type="evidence" value="ECO:0007669"/>
    <property type="project" value="UniProtKB-UniRule"/>
</dbReference>
<dbReference type="GO" id="GO:0004654">
    <property type="term" value="F:polyribonucleotide nucleotidyltransferase activity"/>
    <property type="evidence" value="ECO:0007669"/>
    <property type="project" value="UniProtKB-UniRule"/>
</dbReference>
<dbReference type="GO" id="GO:0003723">
    <property type="term" value="F:RNA binding"/>
    <property type="evidence" value="ECO:0007669"/>
    <property type="project" value="UniProtKB-UniRule"/>
</dbReference>
<dbReference type="GO" id="GO:0006402">
    <property type="term" value="P:mRNA catabolic process"/>
    <property type="evidence" value="ECO:0007669"/>
    <property type="project" value="UniProtKB-UniRule"/>
</dbReference>
<dbReference type="GO" id="GO:0006396">
    <property type="term" value="P:RNA processing"/>
    <property type="evidence" value="ECO:0007669"/>
    <property type="project" value="InterPro"/>
</dbReference>
<dbReference type="CDD" id="cd02393">
    <property type="entry name" value="KH-I_PNPase"/>
    <property type="match status" value="1"/>
</dbReference>
<dbReference type="CDD" id="cd11363">
    <property type="entry name" value="RNase_PH_PNPase_1"/>
    <property type="match status" value="1"/>
</dbReference>
<dbReference type="CDD" id="cd11364">
    <property type="entry name" value="RNase_PH_PNPase_2"/>
    <property type="match status" value="1"/>
</dbReference>
<dbReference type="CDD" id="cd04472">
    <property type="entry name" value="S1_PNPase"/>
    <property type="match status" value="1"/>
</dbReference>
<dbReference type="FunFam" id="2.40.50.140:FF:000023">
    <property type="entry name" value="Polyribonucleotide nucleotidyltransferase"/>
    <property type="match status" value="1"/>
</dbReference>
<dbReference type="FunFam" id="3.30.1370.10:FF:000001">
    <property type="entry name" value="Polyribonucleotide nucleotidyltransferase"/>
    <property type="match status" value="1"/>
</dbReference>
<dbReference type="FunFam" id="3.30.230.70:FF:000001">
    <property type="entry name" value="Polyribonucleotide nucleotidyltransferase"/>
    <property type="match status" value="1"/>
</dbReference>
<dbReference type="FunFam" id="3.30.230.70:FF:000002">
    <property type="entry name" value="Polyribonucleotide nucleotidyltransferase"/>
    <property type="match status" value="1"/>
</dbReference>
<dbReference type="Gene3D" id="3.30.230.70">
    <property type="entry name" value="GHMP Kinase, N-terminal domain"/>
    <property type="match status" value="2"/>
</dbReference>
<dbReference type="Gene3D" id="3.30.1370.10">
    <property type="entry name" value="K Homology domain, type 1"/>
    <property type="match status" value="1"/>
</dbReference>
<dbReference type="Gene3D" id="2.40.50.140">
    <property type="entry name" value="Nucleic acid-binding proteins"/>
    <property type="match status" value="1"/>
</dbReference>
<dbReference type="HAMAP" id="MF_01595">
    <property type="entry name" value="PNPase"/>
    <property type="match status" value="1"/>
</dbReference>
<dbReference type="InterPro" id="IPR001247">
    <property type="entry name" value="ExoRNase_PH_dom1"/>
</dbReference>
<dbReference type="InterPro" id="IPR015847">
    <property type="entry name" value="ExoRNase_PH_dom2"/>
</dbReference>
<dbReference type="InterPro" id="IPR036345">
    <property type="entry name" value="ExoRNase_PH_dom2_sf"/>
</dbReference>
<dbReference type="InterPro" id="IPR004087">
    <property type="entry name" value="KH_dom"/>
</dbReference>
<dbReference type="InterPro" id="IPR004088">
    <property type="entry name" value="KH_dom_type_1"/>
</dbReference>
<dbReference type="InterPro" id="IPR036612">
    <property type="entry name" value="KH_dom_type_1_sf"/>
</dbReference>
<dbReference type="InterPro" id="IPR012340">
    <property type="entry name" value="NA-bd_OB-fold"/>
</dbReference>
<dbReference type="InterPro" id="IPR012162">
    <property type="entry name" value="PNPase"/>
</dbReference>
<dbReference type="InterPro" id="IPR027408">
    <property type="entry name" value="PNPase/RNase_PH_dom_sf"/>
</dbReference>
<dbReference type="InterPro" id="IPR015848">
    <property type="entry name" value="PNPase_PH_RNA-bd_bac/org-type"/>
</dbReference>
<dbReference type="InterPro" id="IPR036456">
    <property type="entry name" value="PNPase_PH_RNA-bd_sf"/>
</dbReference>
<dbReference type="InterPro" id="IPR020568">
    <property type="entry name" value="Ribosomal_Su5_D2-typ_SF"/>
</dbReference>
<dbReference type="InterPro" id="IPR003029">
    <property type="entry name" value="S1_domain"/>
</dbReference>
<dbReference type="NCBIfam" id="TIGR03591">
    <property type="entry name" value="polynuc_phos"/>
    <property type="match status" value="1"/>
</dbReference>
<dbReference type="NCBIfam" id="NF008805">
    <property type="entry name" value="PRK11824.1"/>
    <property type="match status" value="1"/>
</dbReference>
<dbReference type="PANTHER" id="PTHR11252">
    <property type="entry name" value="POLYRIBONUCLEOTIDE NUCLEOTIDYLTRANSFERASE"/>
    <property type="match status" value="1"/>
</dbReference>
<dbReference type="PANTHER" id="PTHR11252:SF0">
    <property type="entry name" value="POLYRIBONUCLEOTIDE NUCLEOTIDYLTRANSFERASE 1, MITOCHONDRIAL"/>
    <property type="match status" value="1"/>
</dbReference>
<dbReference type="Pfam" id="PF00013">
    <property type="entry name" value="KH_1"/>
    <property type="match status" value="1"/>
</dbReference>
<dbReference type="Pfam" id="PF03726">
    <property type="entry name" value="PNPase"/>
    <property type="match status" value="1"/>
</dbReference>
<dbReference type="Pfam" id="PF01138">
    <property type="entry name" value="RNase_PH"/>
    <property type="match status" value="2"/>
</dbReference>
<dbReference type="Pfam" id="PF03725">
    <property type="entry name" value="RNase_PH_C"/>
    <property type="match status" value="2"/>
</dbReference>
<dbReference type="Pfam" id="PF00575">
    <property type="entry name" value="S1"/>
    <property type="match status" value="1"/>
</dbReference>
<dbReference type="PIRSF" id="PIRSF005499">
    <property type="entry name" value="PNPase"/>
    <property type="match status" value="1"/>
</dbReference>
<dbReference type="SMART" id="SM00322">
    <property type="entry name" value="KH"/>
    <property type="match status" value="1"/>
</dbReference>
<dbReference type="SMART" id="SM00316">
    <property type="entry name" value="S1"/>
    <property type="match status" value="1"/>
</dbReference>
<dbReference type="SUPFAM" id="SSF54791">
    <property type="entry name" value="Eukaryotic type KH-domain (KH-domain type I)"/>
    <property type="match status" value="1"/>
</dbReference>
<dbReference type="SUPFAM" id="SSF50249">
    <property type="entry name" value="Nucleic acid-binding proteins"/>
    <property type="match status" value="1"/>
</dbReference>
<dbReference type="SUPFAM" id="SSF46915">
    <property type="entry name" value="Polynucleotide phosphorylase/guanosine pentaphosphate synthase (PNPase/GPSI), domain 3"/>
    <property type="match status" value="1"/>
</dbReference>
<dbReference type="SUPFAM" id="SSF55666">
    <property type="entry name" value="Ribonuclease PH domain 2-like"/>
    <property type="match status" value="2"/>
</dbReference>
<dbReference type="SUPFAM" id="SSF54211">
    <property type="entry name" value="Ribosomal protein S5 domain 2-like"/>
    <property type="match status" value="2"/>
</dbReference>
<dbReference type="PROSITE" id="PS50084">
    <property type="entry name" value="KH_TYPE_1"/>
    <property type="match status" value="1"/>
</dbReference>
<dbReference type="PROSITE" id="PS50126">
    <property type="entry name" value="S1"/>
    <property type="match status" value="1"/>
</dbReference>
<organism>
    <name type="scientific">Thermoanaerobacter sp. (strain X514)</name>
    <dbReference type="NCBI Taxonomy" id="399726"/>
    <lineage>
        <taxon>Bacteria</taxon>
        <taxon>Bacillati</taxon>
        <taxon>Bacillota</taxon>
        <taxon>Clostridia</taxon>
        <taxon>Thermoanaerobacterales</taxon>
        <taxon>Thermoanaerobacteraceae</taxon>
        <taxon>Thermoanaerobacter</taxon>
    </lineage>
</organism>
<keyword id="KW-0963">Cytoplasm</keyword>
<keyword id="KW-0460">Magnesium</keyword>
<keyword id="KW-0479">Metal-binding</keyword>
<keyword id="KW-0548">Nucleotidyltransferase</keyword>
<keyword id="KW-0694">RNA-binding</keyword>
<keyword id="KW-0808">Transferase</keyword>
<name>PNP_THEPX</name>
<accession>B0K1D0</accession>
<feature type="chain" id="PRO_0000382423" description="Polyribonucleotide nucleotidyltransferase">
    <location>
        <begin position="1"/>
        <end position="700"/>
    </location>
</feature>
<feature type="domain" description="KH" evidence="1">
    <location>
        <begin position="551"/>
        <end position="610"/>
    </location>
</feature>
<feature type="domain" description="S1 motif" evidence="1">
    <location>
        <begin position="620"/>
        <end position="688"/>
    </location>
</feature>
<feature type="binding site" evidence="1">
    <location>
        <position position="484"/>
    </location>
    <ligand>
        <name>Mg(2+)</name>
        <dbReference type="ChEBI" id="CHEBI:18420"/>
    </ligand>
</feature>
<feature type="binding site" evidence="1">
    <location>
        <position position="490"/>
    </location>
    <ligand>
        <name>Mg(2+)</name>
        <dbReference type="ChEBI" id="CHEBI:18420"/>
    </ligand>
</feature>
<sequence>MEERTFEMELAGRKLLVQIGKVAQQANGAAWVKYGDTVVLVTACASKEPREGIDFFPLTVEYEERLYSVGKIPGGFIKREGKPSEKAILSARLIDRPIRPLFPHGYRNDVQVIATVLSVDPDVQPEIVAMIGSSVALSISDIPFDGPTGAVAVGLVDGQFIINPNHEQREKSLMHLVVSGTKDAIVMVEAGAKEVPEETMLDAIMYAHEYIKQIVEFIEGIVKEVGVPKSEVILHEIDKELEEKVRAYATEKIYNALRTAEKKERNDNLDKVEQEVLEHFKEEYPDNLADIDEVLYNIMKEQMRKMITEERIRVDGRGLDDIRPIWCEVGVLPRTHGSAIFTRGQTQVLTVATLGALGDIQILDGIGDEEAKRYMHHYNFPPYSVGEVRPLRGPGRREIGHGALAERALEPVIPSEEEFPYTIRLVSEVLSSNGSTSQASVCGSTLALMDAGVPIKAPVAGVAMGLIKEGDVVSVLTDIQGIEDFLGDMDFKVAGTEKGITAIQMDIKIPGIDKEILKMALEKARRGRLYILSKMLEVIKEPRKQLSVYAPRVIRMVVDPEKIREIIGPGGKTISKIIAETGVKIDIEEDGRLYITASDLRSGERAKQMIEAITKDIAVGEIYLGKVLRITPFGAFVEIAPGKEGLVHISKLSKKRVQKVEDVVKVGDDILVKVTDIDKLGRISLSRKDALPDEEEEERN</sequence>
<protein>
    <recommendedName>
        <fullName evidence="1">Polyribonucleotide nucleotidyltransferase</fullName>
        <ecNumber evidence="1">2.7.7.8</ecNumber>
    </recommendedName>
    <alternativeName>
        <fullName evidence="1">Polynucleotide phosphorylase</fullName>
        <shortName evidence="1">PNPase</shortName>
    </alternativeName>
</protein>
<gene>
    <name evidence="1" type="primary">pnp</name>
    <name type="ordered locus">Teth514_1639</name>
</gene>